<protein>
    <recommendedName>
        <fullName evidence="1">Ferrochelatase</fullName>
        <ecNumber evidence="1">4.98.1.1</ecNumber>
    </recommendedName>
    <alternativeName>
        <fullName evidence="1">Heme synthase</fullName>
    </alternativeName>
    <alternativeName>
        <fullName evidence="1">Protoheme ferro-lyase</fullName>
    </alternativeName>
</protein>
<organism>
    <name type="scientific">Shigella boydii serotype 4 (strain Sb227)</name>
    <dbReference type="NCBI Taxonomy" id="300268"/>
    <lineage>
        <taxon>Bacteria</taxon>
        <taxon>Pseudomonadati</taxon>
        <taxon>Pseudomonadota</taxon>
        <taxon>Gammaproteobacteria</taxon>
        <taxon>Enterobacterales</taxon>
        <taxon>Enterobacteriaceae</taxon>
        <taxon>Shigella</taxon>
    </lineage>
</organism>
<reference key="1">
    <citation type="journal article" date="2005" name="Nucleic Acids Res.">
        <title>Genome dynamics and diversity of Shigella species, the etiologic agents of bacillary dysentery.</title>
        <authorList>
            <person name="Yang F."/>
            <person name="Yang J."/>
            <person name="Zhang X."/>
            <person name="Chen L."/>
            <person name="Jiang Y."/>
            <person name="Yan Y."/>
            <person name="Tang X."/>
            <person name="Wang J."/>
            <person name="Xiong Z."/>
            <person name="Dong J."/>
            <person name="Xue Y."/>
            <person name="Zhu Y."/>
            <person name="Xu X."/>
            <person name="Sun L."/>
            <person name="Chen S."/>
            <person name="Nie H."/>
            <person name="Peng J."/>
            <person name="Xu J."/>
            <person name="Wang Y."/>
            <person name="Yuan Z."/>
            <person name="Wen Y."/>
            <person name="Yao Z."/>
            <person name="Shen Y."/>
            <person name="Qiang B."/>
            <person name="Hou Y."/>
            <person name="Yu J."/>
            <person name="Jin Q."/>
        </authorList>
    </citation>
    <scope>NUCLEOTIDE SEQUENCE [LARGE SCALE GENOMIC DNA]</scope>
    <source>
        <strain>Sb227</strain>
    </source>
</reference>
<accession>Q325C1</accession>
<gene>
    <name evidence="1" type="primary">hemH</name>
    <name type="ordered locus">SBO_0375</name>
</gene>
<sequence length="320" mass="35880">MRQTKTGILLANLGTPDAPTPEAVKRYLKQFLSDRRVVDTSRLLWWPLLRGVILPLRSPRVAKLYASVWMEGGSPLMVYSRQQQQALAQRLPETPVALGMSYGSPSLESAVDELLAEHVDHIVVLPLYPQFSCSTVGAVWDELARILARKRSIPGISFIRDYADNHDYINALANSVRASFAKHGEPDLLLLSYHGIPQRYADEGDDYPQRCRTTTRELASALGMAPEKVMMTFQSRFGREPWLMPYTDETLKMLGEKGVGHIQVMCPGFAADCLETLEEIAEQNREVFLGAGGKKYEYIPALNATPEYIEMMANLVAAYR</sequence>
<comment type="function">
    <text evidence="1">Catalyzes the ferrous insertion into protoporphyrin IX.</text>
</comment>
<comment type="catalytic activity">
    <reaction evidence="1">
        <text>heme b + 2 H(+) = protoporphyrin IX + Fe(2+)</text>
        <dbReference type="Rhea" id="RHEA:22584"/>
        <dbReference type="ChEBI" id="CHEBI:15378"/>
        <dbReference type="ChEBI" id="CHEBI:29033"/>
        <dbReference type="ChEBI" id="CHEBI:57306"/>
        <dbReference type="ChEBI" id="CHEBI:60344"/>
        <dbReference type="EC" id="4.98.1.1"/>
    </reaction>
</comment>
<comment type="pathway">
    <text evidence="1">Porphyrin-containing compound metabolism; protoheme biosynthesis; protoheme from protoporphyrin-IX: step 1/1.</text>
</comment>
<comment type="subunit">
    <text evidence="1">Monomer.</text>
</comment>
<comment type="subcellular location">
    <subcellularLocation>
        <location evidence="1">Cytoplasm</location>
    </subcellularLocation>
</comment>
<comment type="similarity">
    <text evidence="1">Belongs to the ferrochelatase family.</text>
</comment>
<proteinExistence type="inferred from homology"/>
<name>HEMH_SHIBS</name>
<dbReference type="EC" id="4.98.1.1" evidence="1"/>
<dbReference type="EMBL" id="CP000036">
    <property type="protein sequence ID" value="ABB65087.1"/>
    <property type="molecule type" value="Genomic_DNA"/>
</dbReference>
<dbReference type="RefSeq" id="WP_001250106.1">
    <property type="nucleotide sequence ID" value="NC_007613.1"/>
</dbReference>
<dbReference type="SMR" id="Q325C1"/>
<dbReference type="KEGG" id="sbo:SBO_0375"/>
<dbReference type="HOGENOM" id="CLU_018884_0_0_6"/>
<dbReference type="UniPathway" id="UPA00252">
    <property type="reaction ID" value="UER00325"/>
</dbReference>
<dbReference type="Proteomes" id="UP000007067">
    <property type="component" value="Chromosome"/>
</dbReference>
<dbReference type="GO" id="GO:0005737">
    <property type="term" value="C:cytoplasm"/>
    <property type="evidence" value="ECO:0007669"/>
    <property type="project" value="UniProtKB-SubCell"/>
</dbReference>
<dbReference type="GO" id="GO:0004325">
    <property type="term" value="F:ferrochelatase activity"/>
    <property type="evidence" value="ECO:0007669"/>
    <property type="project" value="UniProtKB-UniRule"/>
</dbReference>
<dbReference type="GO" id="GO:0046872">
    <property type="term" value="F:metal ion binding"/>
    <property type="evidence" value="ECO:0007669"/>
    <property type="project" value="UniProtKB-KW"/>
</dbReference>
<dbReference type="GO" id="GO:0006783">
    <property type="term" value="P:heme biosynthetic process"/>
    <property type="evidence" value="ECO:0007669"/>
    <property type="project" value="UniProtKB-UniRule"/>
</dbReference>
<dbReference type="CDD" id="cd00419">
    <property type="entry name" value="Ferrochelatase_C"/>
    <property type="match status" value="1"/>
</dbReference>
<dbReference type="CDD" id="cd03411">
    <property type="entry name" value="Ferrochelatase_N"/>
    <property type="match status" value="1"/>
</dbReference>
<dbReference type="FunFam" id="3.40.50.1400:FF:000004">
    <property type="entry name" value="Ferrochelatase"/>
    <property type="match status" value="1"/>
</dbReference>
<dbReference type="Gene3D" id="3.40.50.1400">
    <property type="match status" value="2"/>
</dbReference>
<dbReference type="HAMAP" id="MF_00323">
    <property type="entry name" value="Ferrochelatase"/>
    <property type="match status" value="1"/>
</dbReference>
<dbReference type="InterPro" id="IPR001015">
    <property type="entry name" value="Ferrochelatase"/>
</dbReference>
<dbReference type="InterPro" id="IPR019772">
    <property type="entry name" value="Ferrochelatase_AS"/>
</dbReference>
<dbReference type="InterPro" id="IPR033644">
    <property type="entry name" value="Ferrochelatase_C"/>
</dbReference>
<dbReference type="InterPro" id="IPR033659">
    <property type="entry name" value="Ferrochelatase_N"/>
</dbReference>
<dbReference type="NCBIfam" id="TIGR00109">
    <property type="entry name" value="hemH"/>
    <property type="match status" value="1"/>
</dbReference>
<dbReference type="PANTHER" id="PTHR11108">
    <property type="entry name" value="FERROCHELATASE"/>
    <property type="match status" value="1"/>
</dbReference>
<dbReference type="PANTHER" id="PTHR11108:SF1">
    <property type="entry name" value="FERROCHELATASE, MITOCHONDRIAL"/>
    <property type="match status" value="1"/>
</dbReference>
<dbReference type="Pfam" id="PF00762">
    <property type="entry name" value="Ferrochelatase"/>
    <property type="match status" value="1"/>
</dbReference>
<dbReference type="SUPFAM" id="SSF53800">
    <property type="entry name" value="Chelatase"/>
    <property type="match status" value="1"/>
</dbReference>
<dbReference type="PROSITE" id="PS00534">
    <property type="entry name" value="FERROCHELATASE"/>
    <property type="match status" value="1"/>
</dbReference>
<feature type="chain" id="PRO_1000019368" description="Ferrochelatase">
    <location>
        <begin position="1"/>
        <end position="320"/>
    </location>
</feature>
<feature type="binding site" evidence="1">
    <location>
        <position position="194"/>
    </location>
    <ligand>
        <name>Fe cation</name>
        <dbReference type="ChEBI" id="CHEBI:24875"/>
    </ligand>
</feature>
<feature type="binding site" evidence="1">
    <location>
        <position position="275"/>
    </location>
    <ligand>
        <name>Fe cation</name>
        <dbReference type="ChEBI" id="CHEBI:24875"/>
    </ligand>
</feature>
<evidence type="ECO:0000255" key="1">
    <source>
        <dbReference type="HAMAP-Rule" id="MF_00323"/>
    </source>
</evidence>
<keyword id="KW-0963">Cytoplasm</keyword>
<keyword id="KW-0350">Heme biosynthesis</keyword>
<keyword id="KW-0408">Iron</keyword>
<keyword id="KW-0456">Lyase</keyword>
<keyword id="KW-0479">Metal-binding</keyword>
<keyword id="KW-0627">Porphyrin biosynthesis</keyword>